<protein>
    <recommendedName>
        <fullName>Organic hydroperoxide resistance protein-like 1</fullName>
    </recommendedName>
</protein>
<proteinExistence type="inferred from homology"/>
<name>OHRL1_STAES</name>
<gene>
    <name type="ordered locus">SE_0591</name>
</gene>
<dbReference type="EMBL" id="AE015929">
    <property type="protein sequence ID" value="AAO04188.1"/>
    <property type="molecule type" value="Genomic_DNA"/>
</dbReference>
<dbReference type="RefSeq" id="NP_764146.1">
    <property type="nucleotide sequence ID" value="NC_004461.1"/>
</dbReference>
<dbReference type="RefSeq" id="WP_002457221.1">
    <property type="nucleotide sequence ID" value="NZ_WBME01000029.1"/>
</dbReference>
<dbReference type="SMR" id="Q8CTB6"/>
<dbReference type="KEGG" id="sep:SE_0591"/>
<dbReference type="PATRIC" id="fig|176280.10.peg.563"/>
<dbReference type="eggNOG" id="COG1764">
    <property type="taxonomic scope" value="Bacteria"/>
</dbReference>
<dbReference type="HOGENOM" id="CLU_106355_2_1_9"/>
<dbReference type="OrthoDB" id="9797508at2"/>
<dbReference type="Proteomes" id="UP000001411">
    <property type="component" value="Chromosome"/>
</dbReference>
<dbReference type="GO" id="GO:0006979">
    <property type="term" value="P:response to oxidative stress"/>
    <property type="evidence" value="ECO:0007669"/>
    <property type="project" value="InterPro"/>
</dbReference>
<dbReference type="Gene3D" id="2.20.25.10">
    <property type="match status" value="1"/>
</dbReference>
<dbReference type="Gene3D" id="3.30.300.20">
    <property type="match status" value="1"/>
</dbReference>
<dbReference type="InterPro" id="IPR015946">
    <property type="entry name" value="KH_dom-like_a/b"/>
</dbReference>
<dbReference type="InterPro" id="IPR019953">
    <property type="entry name" value="OHR"/>
</dbReference>
<dbReference type="InterPro" id="IPR003718">
    <property type="entry name" value="OsmC/Ohr_fam"/>
</dbReference>
<dbReference type="InterPro" id="IPR036102">
    <property type="entry name" value="OsmC/Ohrsf"/>
</dbReference>
<dbReference type="NCBIfam" id="TIGR03561">
    <property type="entry name" value="organ_hyd_perox"/>
    <property type="match status" value="1"/>
</dbReference>
<dbReference type="PANTHER" id="PTHR33797">
    <property type="entry name" value="ORGANIC HYDROPEROXIDE RESISTANCE PROTEIN-LIKE"/>
    <property type="match status" value="1"/>
</dbReference>
<dbReference type="PANTHER" id="PTHR33797:SF2">
    <property type="entry name" value="ORGANIC HYDROPEROXIDE RESISTANCE PROTEIN-LIKE"/>
    <property type="match status" value="1"/>
</dbReference>
<dbReference type="Pfam" id="PF02566">
    <property type="entry name" value="OsmC"/>
    <property type="match status" value="1"/>
</dbReference>
<dbReference type="SUPFAM" id="SSF82784">
    <property type="entry name" value="OsmC-like"/>
    <property type="match status" value="1"/>
</dbReference>
<evidence type="ECO:0000305" key="1"/>
<sequence>MAVQYETKATNVGGRKGHVHTDDNAINVDVLPPQQADGKATNPEQLFAAGYASCFNGAFDLILKQNKVRDAEPEVTLTVRLEDDPDAESPKLSVDIHAKVKNVLSQEDAEKYLQDAHDFCPYSKATRGNIDVNLNVEVVE</sequence>
<organism>
    <name type="scientific">Staphylococcus epidermidis (strain ATCC 12228 / FDA PCI 1200)</name>
    <dbReference type="NCBI Taxonomy" id="176280"/>
    <lineage>
        <taxon>Bacteria</taxon>
        <taxon>Bacillati</taxon>
        <taxon>Bacillota</taxon>
        <taxon>Bacilli</taxon>
        <taxon>Bacillales</taxon>
        <taxon>Staphylococcaceae</taxon>
        <taxon>Staphylococcus</taxon>
    </lineage>
</organism>
<comment type="similarity">
    <text evidence="1">Belongs to the OsmC/Ohr family.</text>
</comment>
<feature type="chain" id="PRO_0000288964" description="Organic hydroperoxide resistance protein-like 1">
    <location>
        <begin position="1"/>
        <end position="140"/>
    </location>
</feature>
<accession>Q8CTB6</accession>
<reference key="1">
    <citation type="journal article" date="2003" name="Mol. Microbiol.">
        <title>Genome-based analysis of virulence genes in a non-biofilm-forming Staphylococcus epidermidis strain (ATCC 12228).</title>
        <authorList>
            <person name="Zhang Y.-Q."/>
            <person name="Ren S.-X."/>
            <person name="Li H.-L."/>
            <person name="Wang Y.-X."/>
            <person name="Fu G."/>
            <person name="Yang J."/>
            <person name="Qin Z.-Q."/>
            <person name="Miao Y.-G."/>
            <person name="Wang W.-Y."/>
            <person name="Chen R.-S."/>
            <person name="Shen Y."/>
            <person name="Chen Z."/>
            <person name="Yuan Z.-H."/>
            <person name="Zhao G.-P."/>
            <person name="Qu D."/>
            <person name="Danchin A."/>
            <person name="Wen Y.-M."/>
        </authorList>
    </citation>
    <scope>NUCLEOTIDE SEQUENCE [LARGE SCALE GENOMIC DNA]</scope>
    <source>
        <strain>ATCC 12228 / FDA PCI 1200</strain>
    </source>
</reference>